<dbReference type="EC" id="2.7.7.6" evidence="1"/>
<dbReference type="EMBL" id="FM204883">
    <property type="protein sequence ID" value="CAW92042.1"/>
    <property type="molecule type" value="Genomic_DNA"/>
</dbReference>
<dbReference type="RefSeq" id="WP_012678805.1">
    <property type="nucleotide sequence ID" value="NC_012471.1"/>
</dbReference>
<dbReference type="SMR" id="C0M7R5"/>
<dbReference type="KEGG" id="seu:SEQ_0099"/>
<dbReference type="HOGENOM" id="CLU_000524_3_1_9"/>
<dbReference type="OrthoDB" id="9815296at2"/>
<dbReference type="Proteomes" id="UP000001365">
    <property type="component" value="Chromosome"/>
</dbReference>
<dbReference type="GO" id="GO:0000428">
    <property type="term" value="C:DNA-directed RNA polymerase complex"/>
    <property type="evidence" value="ECO:0007669"/>
    <property type="project" value="UniProtKB-KW"/>
</dbReference>
<dbReference type="GO" id="GO:0003677">
    <property type="term" value="F:DNA binding"/>
    <property type="evidence" value="ECO:0007669"/>
    <property type="project" value="UniProtKB-UniRule"/>
</dbReference>
<dbReference type="GO" id="GO:0003899">
    <property type="term" value="F:DNA-directed RNA polymerase activity"/>
    <property type="evidence" value="ECO:0007669"/>
    <property type="project" value="UniProtKB-UniRule"/>
</dbReference>
<dbReference type="GO" id="GO:0000287">
    <property type="term" value="F:magnesium ion binding"/>
    <property type="evidence" value="ECO:0007669"/>
    <property type="project" value="UniProtKB-UniRule"/>
</dbReference>
<dbReference type="GO" id="GO:0008270">
    <property type="term" value="F:zinc ion binding"/>
    <property type="evidence" value="ECO:0007669"/>
    <property type="project" value="UniProtKB-UniRule"/>
</dbReference>
<dbReference type="GO" id="GO:0006351">
    <property type="term" value="P:DNA-templated transcription"/>
    <property type="evidence" value="ECO:0007669"/>
    <property type="project" value="UniProtKB-UniRule"/>
</dbReference>
<dbReference type="CDD" id="cd02655">
    <property type="entry name" value="RNAP_beta'_C"/>
    <property type="match status" value="1"/>
</dbReference>
<dbReference type="CDD" id="cd01609">
    <property type="entry name" value="RNAP_beta'_N"/>
    <property type="match status" value="1"/>
</dbReference>
<dbReference type="FunFam" id="1.10.150.390:FF:000002">
    <property type="entry name" value="DNA-directed RNA polymerase subunit beta"/>
    <property type="match status" value="1"/>
</dbReference>
<dbReference type="FunFam" id="4.10.860.120:FF:000001">
    <property type="entry name" value="DNA-directed RNA polymerase subunit beta"/>
    <property type="match status" value="1"/>
</dbReference>
<dbReference type="Gene3D" id="1.10.132.30">
    <property type="match status" value="1"/>
</dbReference>
<dbReference type="Gene3D" id="1.10.150.390">
    <property type="match status" value="1"/>
</dbReference>
<dbReference type="Gene3D" id="1.10.1790.20">
    <property type="match status" value="1"/>
</dbReference>
<dbReference type="Gene3D" id="1.10.40.90">
    <property type="match status" value="1"/>
</dbReference>
<dbReference type="Gene3D" id="2.40.40.20">
    <property type="match status" value="1"/>
</dbReference>
<dbReference type="Gene3D" id="2.40.50.100">
    <property type="match status" value="1"/>
</dbReference>
<dbReference type="Gene3D" id="4.10.860.120">
    <property type="entry name" value="RNA polymerase II, clamp domain"/>
    <property type="match status" value="1"/>
</dbReference>
<dbReference type="Gene3D" id="1.10.274.100">
    <property type="entry name" value="RNA polymerase Rpb1, domain 3"/>
    <property type="match status" value="1"/>
</dbReference>
<dbReference type="HAMAP" id="MF_01322">
    <property type="entry name" value="RNApol_bact_RpoC"/>
    <property type="match status" value="1"/>
</dbReference>
<dbReference type="InterPro" id="IPR045867">
    <property type="entry name" value="DNA-dir_RpoC_beta_prime"/>
</dbReference>
<dbReference type="InterPro" id="IPR012754">
    <property type="entry name" value="DNA-dir_RpoC_beta_prime_bact"/>
</dbReference>
<dbReference type="InterPro" id="IPR000722">
    <property type="entry name" value="RNA_pol_asu"/>
</dbReference>
<dbReference type="InterPro" id="IPR006592">
    <property type="entry name" value="RNA_pol_N"/>
</dbReference>
<dbReference type="InterPro" id="IPR007080">
    <property type="entry name" value="RNA_pol_Rpb1_1"/>
</dbReference>
<dbReference type="InterPro" id="IPR007066">
    <property type="entry name" value="RNA_pol_Rpb1_3"/>
</dbReference>
<dbReference type="InterPro" id="IPR042102">
    <property type="entry name" value="RNA_pol_Rpb1_3_sf"/>
</dbReference>
<dbReference type="InterPro" id="IPR007083">
    <property type="entry name" value="RNA_pol_Rpb1_4"/>
</dbReference>
<dbReference type="InterPro" id="IPR007081">
    <property type="entry name" value="RNA_pol_Rpb1_5"/>
</dbReference>
<dbReference type="InterPro" id="IPR044893">
    <property type="entry name" value="RNA_pol_Rpb1_clamp_domain"/>
</dbReference>
<dbReference type="InterPro" id="IPR038120">
    <property type="entry name" value="Rpb1_funnel_sf"/>
</dbReference>
<dbReference type="NCBIfam" id="TIGR02386">
    <property type="entry name" value="rpoC_TIGR"/>
    <property type="match status" value="1"/>
</dbReference>
<dbReference type="PANTHER" id="PTHR19376">
    <property type="entry name" value="DNA-DIRECTED RNA POLYMERASE"/>
    <property type="match status" value="1"/>
</dbReference>
<dbReference type="PANTHER" id="PTHR19376:SF54">
    <property type="entry name" value="DNA-DIRECTED RNA POLYMERASE SUBUNIT BETA"/>
    <property type="match status" value="1"/>
</dbReference>
<dbReference type="Pfam" id="PF04997">
    <property type="entry name" value="RNA_pol_Rpb1_1"/>
    <property type="match status" value="1"/>
</dbReference>
<dbReference type="Pfam" id="PF00623">
    <property type="entry name" value="RNA_pol_Rpb1_2"/>
    <property type="match status" value="2"/>
</dbReference>
<dbReference type="Pfam" id="PF04983">
    <property type="entry name" value="RNA_pol_Rpb1_3"/>
    <property type="match status" value="1"/>
</dbReference>
<dbReference type="Pfam" id="PF05000">
    <property type="entry name" value="RNA_pol_Rpb1_4"/>
    <property type="match status" value="1"/>
</dbReference>
<dbReference type="Pfam" id="PF04998">
    <property type="entry name" value="RNA_pol_Rpb1_5"/>
    <property type="match status" value="1"/>
</dbReference>
<dbReference type="SMART" id="SM00663">
    <property type="entry name" value="RPOLA_N"/>
    <property type="match status" value="1"/>
</dbReference>
<dbReference type="SUPFAM" id="SSF64484">
    <property type="entry name" value="beta and beta-prime subunits of DNA dependent RNA-polymerase"/>
    <property type="match status" value="1"/>
</dbReference>
<name>RPOC_STRE4</name>
<feature type="chain" id="PRO_1000165849" description="DNA-directed RNA polymerase subunit beta'">
    <location>
        <begin position="1"/>
        <end position="1211"/>
    </location>
</feature>
<feature type="binding site" evidence="1">
    <location>
        <position position="60"/>
    </location>
    <ligand>
        <name>Zn(2+)</name>
        <dbReference type="ChEBI" id="CHEBI:29105"/>
        <label>1</label>
    </ligand>
</feature>
<feature type="binding site" evidence="1">
    <location>
        <position position="62"/>
    </location>
    <ligand>
        <name>Zn(2+)</name>
        <dbReference type="ChEBI" id="CHEBI:29105"/>
        <label>1</label>
    </ligand>
</feature>
<feature type="binding site" evidence="1">
    <location>
        <position position="75"/>
    </location>
    <ligand>
        <name>Zn(2+)</name>
        <dbReference type="ChEBI" id="CHEBI:29105"/>
        <label>1</label>
    </ligand>
</feature>
<feature type="binding site" evidence="1">
    <location>
        <position position="78"/>
    </location>
    <ligand>
        <name>Zn(2+)</name>
        <dbReference type="ChEBI" id="CHEBI:29105"/>
        <label>1</label>
    </ligand>
</feature>
<feature type="binding site" evidence="1">
    <location>
        <position position="450"/>
    </location>
    <ligand>
        <name>Mg(2+)</name>
        <dbReference type="ChEBI" id="CHEBI:18420"/>
    </ligand>
</feature>
<feature type="binding site" evidence="1">
    <location>
        <position position="452"/>
    </location>
    <ligand>
        <name>Mg(2+)</name>
        <dbReference type="ChEBI" id="CHEBI:18420"/>
    </ligand>
</feature>
<feature type="binding site" evidence="1">
    <location>
        <position position="454"/>
    </location>
    <ligand>
        <name>Mg(2+)</name>
        <dbReference type="ChEBI" id="CHEBI:18420"/>
    </ligand>
</feature>
<feature type="binding site" evidence="1">
    <location>
        <position position="819"/>
    </location>
    <ligand>
        <name>Zn(2+)</name>
        <dbReference type="ChEBI" id="CHEBI:29105"/>
        <label>2</label>
    </ligand>
</feature>
<feature type="binding site" evidence="1">
    <location>
        <position position="893"/>
    </location>
    <ligand>
        <name>Zn(2+)</name>
        <dbReference type="ChEBI" id="CHEBI:29105"/>
        <label>2</label>
    </ligand>
</feature>
<feature type="binding site" evidence="1">
    <location>
        <position position="900"/>
    </location>
    <ligand>
        <name>Zn(2+)</name>
        <dbReference type="ChEBI" id="CHEBI:29105"/>
        <label>2</label>
    </ligand>
</feature>
<feature type="binding site" evidence="1">
    <location>
        <position position="903"/>
    </location>
    <ligand>
        <name>Zn(2+)</name>
        <dbReference type="ChEBI" id="CHEBI:29105"/>
        <label>2</label>
    </ligand>
</feature>
<sequence>MVDVNRFKSMQITLASPSKVRSWSYGEVKKPETINYRTLKPEREGLFDEVIFGPTKDWECACGKYKRIRYKGIVCDRCGVEVTRAKVRRERMGHIELKAPVSHIWYFKGIPSRMGLTLDMSPRALEEVIYFAAYVVIDPKDTPLEPKSLLTEREYREKIQEYGHGSFIAKMGAEAIQDLLKRVDLVTEIAELKEELKTATGQKRIKAVRRLDVLDAFHKSGNKPEWMILNILPVIPPDLRPMVQLDGGRFAASDLNDLYRRVINRNNRLARLLELNAPGIIVQNEKRMLQEAVDALIDNGRRGRPITGPGSRPLKSLSHMLKGKQGRFRQNLLGKRVDFSGRSVIAVGPTLKMYQCGVPREMAIELFKPFVIREIVAREFAGNVKAAKRMVERGDERIWDILEEVIKEHPVLLNRAPTLHRLGIQAFEPVLIDGKALRLHPLVCEAYNADFDGDQMAIHVPLSEEAQAEARLLMLAAEHILNPKDGKPVVTPSQDMVLGNYYLTMEDAGREGEGMVFKDKDEAVMAYRNGYVHLHSRVGIAVDSMPSKLWKDSQRHKIMVTTVGKILFNDIMPEDLPYLQEPNNANLTEGTPDKYFLKPGQNIQEVIDSLPINVPFKKKNLGNIIAETFKRFRTTETSAFLDRLKDLGYYHSTLAGLTVGIADIPVIDNKAEIIEAAHHRVEEINKAFRRGLMTDDDRYVAVTTTWREAKEALEKRLIETQDPKNPIVMMMDSGARGNISNFSQLAGMRGLMAAPNGRIMELPILSNFREGLSVLEMFFSTHGARKGMTDTALKTADSGYLTRRLVDVAQDVIIREDDCGTDRGLLIRAITDGKEVTETLEERLQGRYTRKSVKHPETGEVLIGADQLITEDMARKIVDAGVEEVTIRSVFTCATRHGVCRHCYGINLATGDAVEVGEAVGTIAAQSIGEPGTQLTMRTFHTGGVASNTDITQGLPRIQEIFEARNPKGEAVITEVKGTVIEIEEDASTRTKKVYVQGKTGMGEYVVPFTARMKVEVGDEVNRGAALTEGSIQPKHLLEVRDTLSVETYLLAEVQKVYRSQGVEIGDKHVEVMVRQMLRKVRVMDPGDTDLLPGTLMDIADFTDANKEIVISGGIPATSRPVLMGITKASLETNSFLSAASFQETTRVLTDAAIRGKKDHLLGLKENVIIGKIIPAGTGMVRYRNIEPQAINEVEVIEEAEATEEPAIIKE</sequence>
<organism>
    <name type="scientific">Streptococcus equi subsp. equi (strain 4047)</name>
    <dbReference type="NCBI Taxonomy" id="553482"/>
    <lineage>
        <taxon>Bacteria</taxon>
        <taxon>Bacillati</taxon>
        <taxon>Bacillota</taxon>
        <taxon>Bacilli</taxon>
        <taxon>Lactobacillales</taxon>
        <taxon>Streptococcaceae</taxon>
        <taxon>Streptococcus</taxon>
    </lineage>
</organism>
<gene>
    <name evidence="1" type="primary">rpoC</name>
    <name type="ordered locus">SEQ_0099</name>
</gene>
<evidence type="ECO:0000255" key="1">
    <source>
        <dbReference type="HAMAP-Rule" id="MF_01322"/>
    </source>
</evidence>
<comment type="function">
    <text evidence="1">DNA-dependent RNA polymerase catalyzes the transcription of DNA into RNA using the four ribonucleoside triphosphates as substrates.</text>
</comment>
<comment type="catalytic activity">
    <reaction evidence="1">
        <text>RNA(n) + a ribonucleoside 5'-triphosphate = RNA(n+1) + diphosphate</text>
        <dbReference type="Rhea" id="RHEA:21248"/>
        <dbReference type="Rhea" id="RHEA-COMP:14527"/>
        <dbReference type="Rhea" id="RHEA-COMP:17342"/>
        <dbReference type="ChEBI" id="CHEBI:33019"/>
        <dbReference type="ChEBI" id="CHEBI:61557"/>
        <dbReference type="ChEBI" id="CHEBI:140395"/>
        <dbReference type="EC" id="2.7.7.6"/>
    </reaction>
</comment>
<comment type="cofactor">
    <cofactor evidence="1">
        <name>Mg(2+)</name>
        <dbReference type="ChEBI" id="CHEBI:18420"/>
    </cofactor>
    <text evidence="1">Binds 1 Mg(2+) ion per subunit.</text>
</comment>
<comment type="cofactor">
    <cofactor evidence="1">
        <name>Zn(2+)</name>
        <dbReference type="ChEBI" id="CHEBI:29105"/>
    </cofactor>
    <text evidence="1">Binds 2 Zn(2+) ions per subunit.</text>
</comment>
<comment type="subunit">
    <text evidence="1">The RNAP catalytic core consists of 2 alpha, 1 beta, 1 beta' and 1 omega subunit. When a sigma factor is associated with the core the holoenzyme is formed, which can initiate transcription.</text>
</comment>
<comment type="similarity">
    <text evidence="1">Belongs to the RNA polymerase beta' chain family.</text>
</comment>
<keyword id="KW-0240">DNA-directed RNA polymerase</keyword>
<keyword id="KW-0460">Magnesium</keyword>
<keyword id="KW-0479">Metal-binding</keyword>
<keyword id="KW-0548">Nucleotidyltransferase</keyword>
<keyword id="KW-0804">Transcription</keyword>
<keyword id="KW-0808">Transferase</keyword>
<keyword id="KW-0862">Zinc</keyword>
<accession>C0M7R5</accession>
<protein>
    <recommendedName>
        <fullName evidence="1">DNA-directed RNA polymerase subunit beta'</fullName>
        <shortName evidence="1">RNAP subunit beta'</shortName>
        <ecNumber evidence="1">2.7.7.6</ecNumber>
    </recommendedName>
    <alternativeName>
        <fullName evidence="1">RNA polymerase subunit beta'</fullName>
    </alternativeName>
    <alternativeName>
        <fullName evidence="1">Transcriptase subunit beta'</fullName>
    </alternativeName>
</protein>
<proteinExistence type="inferred from homology"/>
<reference key="1">
    <citation type="journal article" date="2009" name="PLoS Pathog.">
        <title>Genomic evidence for the evolution of Streptococcus equi: host restriction, increased virulence, and genetic exchange with human pathogens.</title>
        <authorList>
            <person name="Holden M.T.G."/>
            <person name="Heather Z."/>
            <person name="Paillot R."/>
            <person name="Steward K.F."/>
            <person name="Webb K."/>
            <person name="Ainslie F."/>
            <person name="Jourdan T."/>
            <person name="Bason N.C."/>
            <person name="Holroyd N.E."/>
            <person name="Mungall K."/>
            <person name="Quail M.A."/>
            <person name="Sanders M."/>
            <person name="Simmonds M."/>
            <person name="Willey D."/>
            <person name="Brooks K."/>
            <person name="Aanensen D.M."/>
            <person name="Spratt B.G."/>
            <person name="Jolley K.A."/>
            <person name="Maiden M.C.J."/>
            <person name="Kehoe M."/>
            <person name="Chanter N."/>
            <person name="Bentley S.D."/>
            <person name="Robinson C."/>
            <person name="Maskell D.J."/>
            <person name="Parkhill J."/>
            <person name="Waller A.S."/>
        </authorList>
    </citation>
    <scope>NUCLEOTIDE SEQUENCE [LARGE SCALE GENOMIC DNA]</scope>
    <source>
        <strain>4047</strain>
    </source>
</reference>